<name>RECR_FRAP2</name>
<accession>B0TY95</accession>
<protein>
    <recommendedName>
        <fullName evidence="1">Recombination protein RecR</fullName>
    </recommendedName>
</protein>
<organism>
    <name type="scientific">Francisella philomiragia subsp. philomiragia (strain ATCC 25017 / CCUG 19701 / FSC 153 / O#319-036)</name>
    <dbReference type="NCBI Taxonomy" id="484022"/>
    <lineage>
        <taxon>Bacteria</taxon>
        <taxon>Pseudomonadati</taxon>
        <taxon>Pseudomonadota</taxon>
        <taxon>Gammaproteobacteria</taxon>
        <taxon>Thiotrichales</taxon>
        <taxon>Francisellaceae</taxon>
        <taxon>Francisella</taxon>
    </lineage>
</organism>
<comment type="function">
    <text evidence="1">May play a role in DNA repair. It seems to be involved in an RecBC-independent recombinational process of DNA repair. It may act with RecF and RecO.</text>
</comment>
<comment type="similarity">
    <text evidence="1">Belongs to the RecR family.</text>
</comment>
<proteinExistence type="inferred from homology"/>
<dbReference type="EMBL" id="CP000937">
    <property type="protein sequence ID" value="ABZ86337.1"/>
    <property type="molecule type" value="Genomic_DNA"/>
</dbReference>
<dbReference type="SMR" id="B0TY95"/>
<dbReference type="KEGG" id="fph:Fphi_0116"/>
<dbReference type="eggNOG" id="COG0353">
    <property type="taxonomic scope" value="Bacteria"/>
</dbReference>
<dbReference type="HOGENOM" id="CLU_060739_1_0_6"/>
<dbReference type="GO" id="GO:0003677">
    <property type="term" value="F:DNA binding"/>
    <property type="evidence" value="ECO:0007669"/>
    <property type="project" value="UniProtKB-UniRule"/>
</dbReference>
<dbReference type="GO" id="GO:0008270">
    <property type="term" value="F:zinc ion binding"/>
    <property type="evidence" value="ECO:0007669"/>
    <property type="project" value="UniProtKB-KW"/>
</dbReference>
<dbReference type="GO" id="GO:0006310">
    <property type="term" value="P:DNA recombination"/>
    <property type="evidence" value="ECO:0007669"/>
    <property type="project" value="UniProtKB-UniRule"/>
</dbReference>
<dbReference type="GO" id="GO:0006281">
    <property type="term" value="P:DNA repair"/>
    <property type="evidence" value="ECO:0007669"/>
    <property type="project" value="UniProtKB-UniRule"/>
</dbReference>
<dbReference type="CDD" id="cd01025">
    <property type="entry name" value="TOPRIM_recR"/>
    <property type="match status" value="1"/>
</dbReference>
<dbReference type="Gene3D" id="3.40.1360.10">
    <property type="match status" value="1"/>
</dbReference>
<dbReference type="Gene3D" id="6.10.250.240">
    <property type="match status" value="1"/>
</dbReference>
<dbReference type="Gene3D" id="1.10.8.420">
    <property type="entry name" value="RecR Domain 1"/>
    <property type="match status" value="1"/>
</dbReference>
<dbReference type="HAMAP" id="MF_00017">
    <property type="entry name" value="RecR"/>
    <property type="match status" value="1"/>
</dbReference>
<dbReference type="InterPro" id="IPR000093">
    <property type="entry name" value="DNA_Rcmb_RecR"/>
</dbReference>
<dbReference type="InterPro" id="IPR023627">
    <property type="entry name" value="Rcmb_RecR"/>
</dbReference>
<dbReference type="InterPro" id="IPR015967">
    <property type="entry name" value="Rcmb_RecR_Znf"/>
</dbReference>
<dbReference type="InterPro" id="IPR006171">
    <property type="entry name" value="TOPRIM_dom"/>
</dbReference>
<dbReference type="InterPro" id="IPR034137">
    <property type="entry name" value="TOPRIM_RecR"/>
</dbReference>
<dbReference type="NCBIfam" id="TIGR00615">
    <property type="entry name" value="recR"/>
    <property type="match status" value="1"/>
</dbReference>
<dbReference type="PANTHER" id="PTHR30446">
    <property type="entry name" value="RECOMBINATION PROTEIN RECR"/>
    <property type="match status" value="1"/>
</dbReference>
<dbReference type="PANTHER" id="PTHR30446:SF0">
    <property type="entry name" value="RECOMBINATION PROTEIN RECR"/>
    <property type="match status" value="1"/>
</dbReference>
<dbReference type="Pfam" id="PF21175">
    <property type="entry name" value="RecR_C"/>
    <property type="match status" value="1"/>
</dbReference>
<dbReference type="Pfam" id="PF21176">
    <property type="entry name" value="RecR_HhH"/>
    <property type="match status" value="1"/>
</dbReference>
<dbReference type="Pfam" id="PF02132">
    <property type="entry name" value="RecR_ZnF"/>
    <property type="match status" value="1"/>
</dbReference>
<dbReference type="Pfam" id="PF13662">
    <property type="entry name" value="Toprim_4"/>
    <property type="match status" value="1"/>
</dbReference>
<dbReference type="SMART" id="SM00493">
    <property type="entry name" value="TOPRIM"/>
    <property type="match status" value="1"/>
</dbReference>
<dbReference type="SUPFAM" id="SSF111304">
    <property type="entry name" value="Recombination protein RecR"/>
    <property type="match status" value="1"/>
</dbReference>
<dbReference type="PROSITE" id="PS01300">
    <property type="entry name" value="RECR"/>
    <property type="match status" value="1"/>
</dbReference>
<dbReference type="PROSITE" id="PS50880">
    <property type="entry name" value="TOPRIM"/>
    <property type="match status" value="1"/>
</dbReference>
<evidence type="ECO:0000255" key="1">
    <source>
        <dbReference type="HAMAP-Rule" id="MF_00017"/>
    </source>
</evidence>
<sequence length="201" mass="22317">MNNQIFSPKITAVIESLRKLPTIGKKSSQRLALYLLDKSPETAITIANSLLDAAENIKKCKYCQSLTEKDVCDICGSQNRDESKLCIIESMLDLVAIEEAGFFKGKYFVLNGRISPLDGIGPNELKLDILEQIIINREINEIILAISPTVEGETTAHFISQMIGKDIKISRIGFGVPFGGELEYLDQQTLIHAFNARTNIK</sequence>
<keyword id="KW-0227">DNA damage</keyword>
<keyword id="KW-0233">DNA recombination</keyword>
<keyword id="KW-0234">DNA repair</keyword>
<keyword id="KW-0479">Metal-binding</keyword>
<keyword id="KW-0862">Zinc</keyword>
<keyword id="KW-0863">Zinc-finger</keyword>
<feature type="chain" id="PRO_1000074121" description="Recombination protein RecR">
    <location>
        <begin position="1"/>
        <end position="201"/>
    </location>
</feature>
<feature type="domain" description="Toprim" evidence="1">
    <location>
        <begin position="83"/>
        <end position="177"/>
    </location>
</feature>
<feature type="zinc finger region" description="C4-type" evidence="1">
    <location>
        <begin position="60"/>
        <end position="75"/>
    </location>
</feature>
<reference key="1">
    <citation type="submission" date="2007-12" db="EMBL/GenBank/DDBJ databases">
        <title>Complete sequence of chromosome of Francisella philomiragia subsp. philomiragia ATCC 25017.</title>
        <authorList>
            <consortium name="US DOE Joint Genome Institute"/>
            <person name="Copeland A."/>
            <person name="Lucas S."/>
            <person name="Lapidus A."/>
            <person name="Barry K."/>
            <person name="Detter J.C."/>
            <person name="Glavina del Rio T."/>
            <person name="Hammon N."/>
            <person name="Israni S."/>
            <person name="Dalin E."/>
            <person name="Tice H."/>
            <person name="Pitluck S."/>
            <person name="Chain P."/>
            <person name="Malfatti S."/>
            <person name="Shin M."/>
            <person name="Vergez L."/>
            <person name="Schmutz J."/>
            <person name="Larimer F."/>
            <person name="Land M."/>
            <person name="Hauser L."/>
            <person name="Richardson P."/>
        </authorList>
    </citation>
    <scope>NUCLEOTIDE SEQUENCE [LARGE SCALE GENOMIC DNA]</scope>
    <source>
        <strain>ATCC 25017 / CCUG 19701 / FSC 153 / O#319-036</strain>
    </source>
</reference>
<gene>
    <name evidence="1" type="primary">recR</name>
    <name type="ordered locus">Fphi_0116</name>
</gene>